<organism>
    <name type="scientific">Xanthomonas axonopodis pv. citri (strain 306)</name>
    <dbReference type="NCBI Taxonomy" id="190486"/>
    <lineage>
        <taxon>Bacteria</taxon>
        <taxon>Pseudomonadati</taxon>
        <taxon>Pseudomonadota</taxon>
        <taxon>Gammaproteobacteria</taxon>
        <taxon>Lysobacterales</taxon>
        <taxon>Lysobacteraceae</taxon>
        <taxon>Xanthomonas</taxon>
    </lineage>
</organism>
<name>SUCC_XANAC</name>
<sequence length="389" mass="41397">MNFHEYQSKQLLAEYGIPVPAGKVAATPDEAVEVANSLGNGPWMVKAQIHAGGRGKAGGVKFCKTTDDVKAAAAKMLGTKMSTYQTAGVELPINLVLVTTAGEIVKELYLSILVDRGTKTITYIASSEGGVEIEQVAAETPELIHALNVDFVEGVQGYHGRDFGFKLGLNAKQAGQFASIMVNLYKLFNEKDLALVEINPLAILDDGNLYALDGKFDSDDNAAFRQKQLVAMRDKTQEDETEVTASELDINYVTMDGNIGCMVNGAGLAMATMDVIKLNGGEPANFLDVGGGANKQRVIEAFKLILSSDKVEGIFVNIFGGIVRCDMIAEGIIAAVKEVGVKVPVVVRLEGTNVEEGKQLLRDSGMAIIPADNINDGAKKVVEAVKNAA</sequence>
<feature type="chain" id="PRO_0000102876" description="Succinate--CoA ligase [ADP-forming] subunit beta">
    <location>
        <begin position="1"/>
        <end position="389"/>
    </location>
</feature>
<feature type="domain" description="ATP-grasp" evidence="1">
    <location>
        <begin position="9"/>
        <end position="244"/>
    </location>
</feature>
<feature type="binding site" evidence="1">
    <location>
        <position position="46"/>
    </location>
    <ligand>
        <name>ATP</name>
        <dbReference type="ChEBI" id="CHEBI:30616"/>
    </ligand>
</feature>
<feature type="binding site" evidence="1">
    <location>
        <begin position="53"/>
        <end position="55"/>
    </location>
    <ligand>
        <name>ATP</name>
        <dbReference type="ChEBI" id="CHEBI:30616"/>
    </ligand>
</feature>
<feature type="binding site" evidence="1">
    <location>
        <position position="102"/>
    </location>
    <ligand>
        <name>ATP</name>
        <dbReference type="ChEBI" id="CHEBI:30616"/>
    </ligand>
</feature>
<feature type="binding site" evidence="1">
    <location>
        <position position="107"/>
    </location>
    <ligand>
        <name>ATP</name>
        <dbReference type="ChEBI" id="CHEBI:30616"/>
    </ligand>
</feature>
<feature type="binding site" evidence="1">
    <location>
        <position position="199"/>
    </location>
    <ligand>
        <name>Mg(2+)</name>
        <dbReference type="ChEBI" id="CHEBI:18420"/>
    </ligand>
</feature>
<feature type="binding site" evidence="1">
    <location>
        <position position="213"/>
    </location>
    <ligand>
        <name>Mg(2+)</name>
        <dbReference type="ChEBI" id="CHEBI:18420"/>
    </ligand>
</feature>
<feature type="binding site" evidence="1">
    <location>
        <position position="264"/>
    </location>
    <ligand>
        <name>substrate</name>
        <note>ligand shared with subunit alpha</note>
    </ligand>
</feature>
<feature type="binding site" evidence="1">
    <location>
        <begin position="321"/>
        <end position="323"/>
    </location>
    <ligand>
        <name>substrate</name>
        <note>ligand shared with subunit alpha</note>
    </ligand>
</feature>
<accession>Q8PHL5</accession>
<proteinExistence type="inferred from homology"/>
<dbReference type="EC" id="6.2.1.5" evidence="1"/>
<dbReference type="EMBL" id="AE008923">
    <property type="protein sequence ID" value="AAM38080.1"/>
    <property type="molecule type" value="Genomic_DNA"/>
</dbReference>
<dbReference type="RefSeq" id="WP_005915812.1">
    <property type="nucleotide sequence ID" value="NC_003919.1"/>
</dbReference>
<dbReference type="SMR" id="Q8PHL5"/>
<dbReference type="GeneID" id="66912296"/>
<dbReference type="KEGG" id="xac:XAC3236"/>
<dbReference type="eggNOG" id="COG0045">
    <property type="taxonomic scope" value="Bacteria"/>
</dbReference>
<dbReference type="HOGENOM" id="CLU_037430_0_2_6"/>
<dbReference type="UniPathway" id="UPA00223">
    <property type="reaction ID" value="UER00999"/>
</dbReference>
<dbReference type="Proteomes" id="UP000000576">
    <property type="component" value="Chromosome"/>
</dbReference>
<dbReference type="GO" id="GO:0042709">
    <property type="term" value="C:succinate-CoA ligase complex"/>
    <property type="evidence" value="ECO:0007669"/>
    <property type="project" value="TreeGrafter"/>
</dbReference>
<dbReference type="GO" id="GO:0005524">
    <property type="term" value="F:ATP binding"/>
    <property type="evidence" value="ECO:0007669"/>
    <property type="project" value="UniProtKB-UniRule"/>
</dbReference>
<dbReference type="GO" id="GO:0000287">
    <property type="term" value="F:magnesium ion binding"/>
    <property type="evidence" value="ECO:0007669"/>
    <property type="project" value="UniProtKB-UniRule"/>
</dbReference>
<dbReference type="GO" id="GO:0004775">
    <property type="term" value="F:succinate-CoA ligase (ADP-forming) activity"/>
    <property type="evidence" value="ECO:0007669"/>
    <property type="project" value="UniProtKB-UniRule"/>
</dbReference>
<dbReference type="GO" id="GO:0004776">
    <property type="term" value="F:succinate-CoA ligase (GDP-forming) activity"/>
    <property type="evidence" value="ECO:0007669"/>
    <property type="project" value="RHEA"/>
</dbReference>
<dbReference type="GO" id="GO:0006104">
    <property type="term" value="P:succinyl-CoA metabolic process"/>
    <property type="evidence" value="ECO:0007669"/>
    <property type="project" value="TreeGrafter"/>
</dbReference>
<dbReference type="GO" id="GO:0006099">
    <property type="term" value="P:tricarboxylic acid cycle"/>
    <property type="evidence" value="ECO:0007669"/>
    <property type="project" value="UniProtKB-UniRule"/>
</dbReference>
<dbReference type="FunFam" id="3.30.1490.20:FF:000002">
    <property type="entry name" value="Succinate--CoA ligase [ADP-forming] subunit beta"/>
    <property type="match status" value="1"/>
</dbReference>
<dbReference type="FunFam" id="3.30.470.20:FF:000002">
    <property type="entry name" value="Succinate--CoA ligase [ADP-forming] subunit beta"/>
    <property type="match status" value="1"/>
</dbReference>
<dbReference type="FunFam" id="3.40.50.261:FF:000001">
    <property type="entry name" value="Succinate--CoA ligase [ADP-forming] subunit beta"/>
    <property type="match status" value="1"/>
</dbReference>
<dbReference type="Gene3D" id="3.30.1490.20">
    <property type="entry name" value="ATP-grasp fold, A domain"/>
    <property type="match status" value="1"/>
</dbReference>
<dbReference type="Gene3D" id="3.30.470.20">
    <property type="entry name" value="ATP-grasp fold, B domain"/>
    <property type="match status" value="1"/>
</dbReference>
<dbReference type="Gene3D" id="3.40.50.261">
    <property type="entry name" value="Succinyl-CoA synthetase domains"/>
    <property type="match status" value="1"/>
</dbReference>
<dbReference type="HAMAP" id="MF_00558">
    <property type="entry name" value="Succ_CoA_beta"/>
    <property type="match status" value="1"/>
</dbReference>
<dbReference type="InterPro" id="IPR011761">
    <property type="entry name" value="ATP-grasp"/>
</dbReference>
<dbReference type="InterPro" id="IPR013650">
    <property type="entry name" value="ATP-grasp_succ-CoA_synth-type"/>
</dbReference>
<dbReference type="InterPro" id="IPR013815">
    <property type="entry name" value="ATP_grasp_subdomain_1"/>
</dbReference>
<dbReference type="InterPro" id="IPR017866">
    <property type="entry name" value="Succ-CoA_synthase_bsu_CS"/>
</dbReference>
<dbReference type="InterPro" id="IPR005811">
    <property type="entry name" value="SUCC_ACL_C"/>
</dbReference>
<dbReference type="InterPro" id="IPR005809">
    <property type="entry name" value="Succ_CoA_ligase-like_bsu"/>
</dbReference>
<dbReference type="InterPro" id="IPR016102">
    <property type="entry name" value="Succinyl-CoA_synth-like"/>
</dbReference>
<dbReference type="NCBIfam" id="NF001913">
    <property type="entry name" value="PRK00696.1"/>
    <property type="match status" value="1"/>
</dbReference>
<dbReference type="NCBIfam" id="TIGR01016">
    <property type="entry name" value="sucCoAbeta"/>
    <property type="match status" value="1"/>
</dbReference>
<dbReference type="PANTHER" id="PTHR11815:SF10">
    <property type="entry name" value="SUCCINATE--COA LIGASE [GDP-FORMING] SUBUNIT BETA, MITOCHONDRIAL"/>
    <property type="match status" value="1"/>
</dbReference>
<dbReference type="PANTHER" id="PTHR11815">
    <property type="entry name" value="SUCCINYL-COA SYNTHETASE BETA CHAIN"/>
    <property type="match status" value="1"/>
</dbReference>
<dbReference type="Pfam" id="PF08442">
    <property type="entry name" value="ATP-grasp_2"/>
    <property type="match status" value="1"/>
</dbReference>
<dbReference type="Pfam" id="PF00549">
    <property type="entry name" value="Ligase_CoA"/>
    <property type="match status" value="1"/>
</dbReference>
<dbReference type="PIRSF" id="PIRSF001554">
    <property type="entry name" value="SucCS_beta"/>
    <property type="match status" value="1"/>
</dbReference>
<dbReference type="SUPFAM" id="SSF56059">
    <property type="entry name" value="Glutathione synthetase ATP-binding domain-like"/>
    <property type="match status" value="1"/>
</dbReference>
<dbReference type="SUPFAM" id="SSF52210">
    <property type="entry name" value="Succinyl-CoA synthetase domains"/>
    <property type="match status" value="1"/>
</dbReference>
<dbReference type="PROSITE" id="PS50975">
    <property type="entry name" value="ATP_GRASP"/>
    <property type="match status" value="1"/>
</dbReference>
<dbReference type="PROSITE" id="PS01217">
    <property type="entry name" value="SUCCINYL_COA_LIG_3"/>
    <property type="match status" value="1"/>
</dbReference>
<keyword id="KW-0067">ATP-binding</keyword>
<keyword id="KW-0436">Ligase</keyword>
<keyword id="KW-0460">Magnesium</keyword>
<keyword id="KW-0479">Metal-binding</keyword>
<keyword id="KW-0547">Nucleotide-binding</keyword>
<keyword id="KW-0816">Tricarboxylic acid cycle</keyword>
<protein>
    <recommendedName>
        <fullName evidence="1">Succinate--CoA ligase [ADP-forming] subunit beta</fullName>
        <ecNumber evidence="1">6.2.1.5</ecNumber>
    </recommendedName>
    <alternativeName>
        <fullName evidence="1">Succinyl-CoA synthetase subunit beta</fullName>
        <shortName evidence="1">SCS-beta</shortName>
    </alternativeName>
</protein>
<gene>
    <name evidence="1" type="primary">sucC</name>
    <name type="ordered locus">XAC3236</name>
</gene>
<reference key="1">
    <citation type="journal article" date="2002" name="Nature">
        <title>Comparison of the genomes of two Xanthomonas pathogens with differing host specificities.</title>
        <authorList>
            <person name="da Silva A.C.R."/>
            <person name="Ferro J.A."/>
            <person name="Reinach F.C."/>
            <person name="Farah C.S."/>
            <person name="Furlan L.R."/>
            <person name="Quaggio R.B."/>
            <person name="Monteiro-Vitorello C.B."/>
            <person name="Van Sluys M.A."/>
            <person name="Almeida N.F. Jr."/>
            <person name="Alves L.M.C."/>
            <person name="do Amaral A.M."/>
            <person name="Bertolini M.C."/>
            <person name="Camargo L.E.A."/>
            <person name="Camarotte G."/>
            <person name="Cannavan F."/>
            <person name="Cardozo J."/>
            <person name="Chambergo F."/>
            <person name="Ciapina L.P."/>
            <person name="Cicarelli R.M.B."/>
            <person name="Coutinho L.L."/>
            <person name="Cursino-Santos J.R."/>
            <person name="El-Dorry H."/>
            <person name="Faria J.B."/>
            <person name="Ferreira A.J.S."/>
            <person name="Ferreira R.C.C."/>
            <person name="Ferro M.I.T."/>
            <person name="Formighieri E.F."/>
            <person name="Franco M.C."/>
            <person name="Greggio C.C."/>
            <person name="Gruber A."/>
            <person name="Katsuyama A.M."/>
            <person name="Kishi L.T."/>
            <person name="Leite R.P."/>
            <person name="Lemos E.G.M."/>
            <person name="Lemos M.V.F."/>
            <person name="Locali E.C."/>
            <person name="Machado M.A."/>
            <person name="Madeira A.M.B.N."/>
            <person name="Martinez-Rossi N.M."/>
            <person name="Martins E.C."/>
            <person name="Meidanis J."/>
            <person name="Menck C.F.M."/>
            <person name="Miyaki C.Y."/>
            <person name="Moon D.H."/>
            <person name="Moreira L.M."/>
            <person name="Novo M.T.M."/>
            <person name="Okura V.K."/>
            <person name="Oliveira M.C."/>
            <person name="Oliveira V.R."/>
            <person name="Pereira H.A."/>
            <person name="Rossi A."/>
            <person name="Sena J.A.D."/>
            <person name="Silva C."/>
            <person name="de Souza R.F."/>
            <person name="Spinola L.A.F."/>
            <person name="Takita M.A."/>
            <person name="Tamura R.E."/>
            <person name="Teixeira E.C."/>
            <person name="Tezza R.I.D."/>
            <person name="Trindade dos Santos M."/>
            <person name="Truffi D."/>
            <person name="Tsai S.M."/>
            <person name="White F.F."/>
            <person name="Setubal J.C."/>
            <person name="Kitajima J.P."/>
        </authorList>
    </citation>
    <scope>NUCLEOTIDE SEQUENCE [LARGE SCALE GENOMIC DNA]</scope>
    <source>
        <strain>306</strain>
    </source>
</reference>
<evidence type="ECO:0000255" key="1">
    <source>
        <dbReference type="HAMAP-Rule" id="MF_00558"/>
    </source>
</evidence>
<comment type="function">
    <text evidence="1">Succinyl-CoA synthetase functions in the citric acid cycle (TCA), coupling the hydrolysis of succinyl-CoA to the synthesis of either ATP or GTP and thus represents the only step of substrate-level phosphorylation in the TCA. The beta subunit provides nucleotide specificity of the enzyme and binds the substrate succinate, while the binding sites for coenzyme A and phosphate are found in the alpha subunit.</text>
</comment>
<comment type="catalytic activity">
    <reaction evidence="1">
        <text>succinate + ATP + CoA = succinyl-CoA + ADP + phosphate</text>
        <dbReference type="Rhea" id="RHEA:17661"/>
        <dbReference type="ChEBI" id="CHEBI:30031"/>
        <dbReference type="ChEBI" id="CHEBI:30616"/>
        <dbReference type="ChEBI" id="CHEBI:43474"/>
        <dbReference type="ChEBI" id="CHEBI:57287"/>
        <dbReference type="ChEBI" id="CHEBI:57292"/>
        <dbReference type="ChEBI" id="CHEBI:456216"/>
        <dbReference type="EC" id="6.2.1.5"/>
    </reaction>
    <physiologicalReaction direction="right-to-left" evidence="1">
        <dbReference type="Rhea" id="RHEA:17663"/>
    </physiologicalReaction>
</comment>
<comment type="catalytic activity">
    <reaction evidence="1">
        <text>GTP + succinate + CoA = succinyl-CoA + GDP + phosphate</text>
        <dbReference type="Rhea" id="RHEA:22120"/>
        <dbReference type="ChEBI" id="CHEBI:30031"/>
        <dbReference type="ChEBI" id="CHEBI:37565"/>
        <dbReference type="ChEBI" id="CHEBI:43474"/>
        <dbReference type="ChEBI" id="CHEBI:57287"/>
        <dbReference type="ChEBI" id="CHEBI:57292"/>
        <dbReference type="ChEBI" id="CHEBI:58189"/>
    </reaction>
    <physiologicalReaction direction="right-to-left" evidence="1">
        <dbReference type="Rhea" id="RHEA:22122"/>
    </physiologicalReaction>
</comment>
<comment type="cofactor">
    <cofactor evidence="1">
        <name>Mg(2+)</name>
        <dbReference type="ChEBI" id="CHEBI:18420"/>
    </cofactor>
    <text evidence="1">Binds 1 Mg(2+) ion per subunit.</text>
</comment>
<comment type="pathway">
    <text evidence="1">Carbohydrate metabolism; tricarboxylic acid cycle; succinate from succinyl-CoA (ligase route): step 1/1.</text>
</comment>
<comment type="subunit">
    <text evidence="1">Heterotetramer of two alpha and two beta subunits.</text>
</comment>
<comment type="similarity">
    <text evidence="1">Belongs to the succinate/malate CoA ligase beta subunit family.</text>
</comment>